<protein>
    <recommendedName>
        <fullName evidence="15 17">Vesicle transport v-SNARE 12</fullName>
        <shortName evidence="15 17">AtVTI12</shortName>
    </recommendedName>
    <alternativeName>
        <fullName evidence="16">Protein ZIG SUPPRESSOR 1</fullName>
    </alternativeName>
    <alternativeName>
        <fullName evidence="13 14">Vesicle soluble NSF attachment protein receptor VTI1b</fullName>
        <shortName evidence="13 14">AtVTI1b</shortName>
    </alternativeName>
    <alternativeName>
        <fullName evidence="13 14">Vesicle transport v-SNARE protein VTI1b</fullName>
    </alternativeName>
</protein>
<name>VTI12_ARATH</name>
<organism>
    <name type="scientific">Arabidopsis thaliana</name>
    <name type="common">Mouse-ear cress</name>
    <dbReference type="NCBI Taxonomy" id="3702"/>
    <lineage>
        <taxon>Eukaryota</taxon>
        <taxon>Viridiplantae</taxon>
        <taxon>Streptophyta</taxon>
        <taxon>Embryophyta</taxon>
        <taxon>Tracheophyta</taxon>
        <taxon>Spermatophyta</taxon>
        <taxon>Magnoliopsida</taxon>
        <taxon>eudicotyledons</taxon>
        <taxon>Gunneridae</taxon>
        <taxon>Pentapetalae</taxon>
        <taxon>rosids</taxon>
        <taxon>malvids</taxon>
        <taxon>Brassicales</taxon>
        <taxon>Brassicaceae</taxon>
        <taxon>Camelineae</taxon>
        <taxon>Arabidopsis</taxon>
    </lineage>
</organism>
<keyword id="KW-0007">Acetylation</keyword>
<keyword id="KW-1003">Cell membrane</keyword>
<keyword id="KW-0175">Coiled coil</keyword>
<keyword id="KW-0333">Golgi apparatus</keyword>
<keyword id="KW-0472">Membrane</keyword>
<keyword id="KW-0653">Protein transport</keyword>
<keyword id="KW-1185">Reference proteome</keyword>
<keyword id="KW-0812">Transmembrane</keyword>
<keyword id="KW-1133">Transmembrane helix</keyword>
<keyword id="KW-0813">Transport</keyword>
<evidence type="ECO:0000250" key="1">
    <source>
        <dbReference type="UniProtKB" id="Q04338"/>
    </source>
</evidence>
<evidence type="ECO:0000255" key="2"/>
<evidence type="ECO:0000269" key="3">
    <source>
    </source>
</evidence>
<evidence type="ECO:0000269" key="4">
    <source>
    </source>
</evidence>
<evidence type="ECO:0000269" key="5">
    <source>
    </source>
</evidence>
<evidence type="ECO:0000269" key="6">
    <source>
    </source>
</evidence>
<evidence type="ECO:0000269" key="7">
    <source>
    </source>
</evidence>
<evidence type="ECO:0000269" key="8">
    <source>
    </source>
</evidence>
<evidence type="ECO:0000269" key="9">
    <source>
    </source>
</evidence>
<evidence type="ECO:0000269" key="10">
    <source>
    </source>
</evidence>
<evidence type="ECO:0000269" key="11">
    <source>
    </source>
</evidence>
<evidence type="ECO:0000269" key="12">
    <source>
    </source>
</evidence>
<evidence type="ECO:0000303" key="13">
    <source>
    </source>
</evidence>
<evidence type="ECO:0000303" key="14">
    <source>
    </source>
</evidence>
<evidence type="ECO:0000303" key="15">
    <source>
    </source>
</evidence>
<evidence type="ECO:0000303" key="16">
    <source>
    </source>
</evidence>
<evidence type="ECO:0000303" key="17">
    <source>
    </source>
</evidence>
<evidence type="ECO:0000305" key="18"/>
<evidence type="ECO:0000312" key="19">
    <source>
        <dbReference type="Araport" id="AT1G26670"/>
    </source>
</evidence>
<evidence type="ECO:0000312" key="20">
    <source>
        <dbReference type="EMBL" id="AAF87026.1"/>
    </source>
</evidence>
<evidence type="ECO:0007744" key="21">
    <source>
    </source>
</evidence>
<reference key="1">
    <citation type="journal article" date="1999" name="Mol. Biol. Cell">
        <title>The plant vesicle-associated SNARE AtVTI1a likely mediates vesicle transport from the trans-Golgi network to the prevacuolar compartment.</title>
        <authorList>
            <person name="Zheng H."/>
            <person name="von Mollard G.F."/>
            <person name="Kovaleva V."/>
            <person name="Stevens T.H."/>
            <person name="Raikhel N.V."/>
        </authorList>
    </citation>
    <scope>NUCLEOTIDE SEQUENCE [MRNA]</scope>
    <source>
        <strain>cv. Columbia</strain>
    </source>
</reference>
<reference key="2">
    <citation type="journal article" date="2000" name="Nature">
        <title>Sequence and analysis of chromosome 1 of the plant Arabidopsis thaliana.</title>
        <authorList>
            <person name="Theologis A."/>
            <person name="Ecker J.R."/>
            <person name="Palm C.J."/>
            <person name="Federspiel N.A."/>
            <person name="Kaul S."/>
            <person name="White O."/>
            <person name="Alonso J."/>
            <person name="Altafi H."/>
            <person name="Araujo R."/>
            <person name="Bowman C.L."/>
            <person name="Brooks S.Y."/>
            <person name="Buehler E."/>
            <person name="Chan A."/>
            <person name="Chao Q."/>
            <person name="Chen H."/>
            <person name="Cheuk R.F."/>
            <person name="Chin C.W."/>
            <person name="Chung M.K."/>
            <person name="Conn L."/>
            <person name="Conway A.B."/>
            <person name="Conway A.R."/>
            <person name="Creasy T.H."/>
            <person name="Dewar K."/>
            <person name="Dunn P."/>
            <person name="Etgu P."/>
            <person name="Feldblyum T.V."/>
            <person name="Feng J.-D."/>
            <person name="Fong B."/>
            <person name="Fujii C.Y."/>
            <person name="Gill J.E."/>
            <person name="Goldsmith A.D."/>
            <person name="Haas B."/>
            <person name="Hansen N.F."/>
            <person name="Hughes B."/>
            <person name="Huizar L."/>
            <person name="Hunter J.L."/>
            <person name="Jenkins J."/>
            <person name="Johnson-Hopson C."/>
            <person name="Khan S."/>
            <person name="Khaykin E."/>
            <person name="Kim C.J."/>
            <person name="Koo H.L."/>
            <person name="Kremenetskaia I."/>
            <person name="Kurtz D.B."/>
            <person name="Kwan A."/>
            <person name="Lam B."/>
            <person name="Langin-Hooper S."/>
            <person name="Lee A."/>
            <person name="Lee J.M."/>
            <person name="Lenz C.A."/>
            <person name="Li J.H."/>
            <person name="Li Y.-P."/>
            <person name="Lin X."/>
            <person name="Liu S.X."/>
            <person name="Liu Z.A."/>
            <person name="Luros J.S."/>
            <person name="Maiti R."/>
            <person name="Marziali A."/>
            <person name="Militscher J."/>
            <person name="Miranda M."/>
            <person name="Nguyen M."/>
            <person name="Nierman W.C."/>
            <person name="Osborne B.I."/>
            <person name="Pai G."/>
            <person name="Peterson J."/>
            <person name="Pham P.K."/>
            <person name="Rizzo M."/>
            <person name="Rooney T."/>
            <person name="Rowley D."/>
            <person name="Sakano H."/>
            <person name="Salzberg S.L."/>
            <person name="Schwartz J.R."/>
            <person name="Shinn P."/>
            <person name="Southwick A.M."/>
            <person name="Sun H."/>
            <person name="Tallon L.J."/>
            <person name="Tambunga G."/>
            <person name="Toriumi M.J."/>
            <person name="Town C.D."/>
            <person name="Utterback T."/>
            <person name="Van Aken S."/>
            <person name="Vaysberg M."/>
            <person name="Vysotskaia V.S."/>
            <person name="Walker M."/>
            <person name="Wu D."/>
            <person name="Yu G."/>
            <person name="Fraser C.M."/>
            <person name="Venter J.C."/>
            <person name="Davis R.W."/>
        </authorList>
    </citation>
    <scope>NUCLEOTIDE SEQUENCE [LARGE SCALE GENOMIC DNA]</scope>
    <source>
        <strain>cv. Columbia</strain>
    </source>
</reference>
<reference key="3">
    <citation type="journal article" date="2017" name="Plant J.">
        <title>Araport11: a complete reannotation of the Arabidopsis thaliana reference genome.</title>
        <authorList>
            <person name="Cheng C.Y."/>
            <person name="Krishnakumar V."/>
            <person name="Chan A.P."/>
            <person name="Thibaud-Nissen F."/>
            <person name="Schobel S."/>
            <person name="Town C.D."/>
        </authorList>
    </citation>
    <scope>GENOME REANNOTATION</scope>
    <source>
        <strain>cv. Columbia</strain>
    </source>
</reference>
<reference key="4">
    <citation type="journal article" date="2000" name="Mol. Biol. Cell">
        <title>AtVPS45 complex formation at the trans-Golgi network.</title>
        <authorList>
            <person name="Bassham D.C."/>
            <person name="Sanderfoot A.A."/>
            <person name="Kovaleva V."/>
            <person name="Zheng H."/>
            <person name="Raikhel N.V."/>
        </authorList>
    </citation>
    <scope>INTERACTION WITH VPS45</scope>
</reference>
<reference key="5">
    <citation type="journal article" date="2001" name="Mol. Biol. Cell">
        <title>Interactions between syntaxins identify at least five SNARE complexes within the Golgi/prevacuolar system of the Arabidopsis cell.</title>
        <authorList>
            <person name="Sanderfoot A.A."/>
            <person name="Kovaleva V."/>
            <person name="Bassham D.C."/>
            <person name="Raikhel N.V."/>
        </authorList>
    </citation>
    <scope>INTERACTION WITH SYP41; SYP42; SYP51 AND SYP61</scope>
</reference>
<reference key="6">
    <citation type="journal article" date="2004" name="Cell Struct. Funct.">
        <title>Systematic analysis of SNARE molecules in Arabidopsis: dissection of the post-Golgi network in plant cells.</title>
        <authorList>
            <person name="Uemura T."/>
            <person name="Ueda T."/>
            <person name="Ohniwa R.L."/>
            <person name="Nakano A."/>
            <person name="Takeyasu K."/>
            <person name="Sato M.H."/>
        </authorList>
    </citation>
    <scope>SUBCELLULAR LOCATION</scope>
    <scope>TISSUE SPECIFICITY</scope>
</reference>
<reference key="7">
    <citation type="journal article" date="2005" name="Curr. Biol.">
        <title>Conversion of functional specificity in Qb-SNARE VTI1 homologues of Arabidopsis.</title>
        <authorList>
            <person name="Niihama M."/>
            <person name="Uemura T."/>
            <person name="Saito C."/>
            <person name="Nakano A."/>
            <person name="Sato M.H."/>
            <person name="Tasaka M."/>
            <person name="Morita M.T."/>
        </authorList>
    </citation>
    <scope>FUNCTION</scope>
    <scope>MUTAGENESIS OF GLU-129</scope>
    <scope>SUBCELLULAR LOCATION</scope>
    <source>
        <strain>cv. Columbia</strain>
    </source>
</reference>
<reference key="8">
    <citation type="journal article" date="2005" name="J. Mol. Biol.">
        <title>YKT6 is a core constituent of membrane fusion machineries at the Arabidopsis trans-Golgi network.</title>
        <authorList>
            <person name="Chen Y."/>
            <person name="Shin Y.-K."/>
            <person name="Bassham D.C."/>
        </authorList>
    </citation>
    <scope>FUNCTION</scope>
    <scope>SUBUNIT</scope>
    <scope>INTERACTION WITH SYP41</scope>
</reference>
<reference key="9">
    <citation type="journal article" date="2007" name="Plant Physiol.">
        <title>EpsinR2 interacts with clathrin, adaptor protein-3, AtVTI12, and phosphatidylinositol-3-phosphate. Implications for EpsinR2 function in protein trafficking in plant cells.</title>
        <authorList>
            <person name="Lee G.-J."/>
            <person name="Kim H."/>
            <person name="Kang H."/>
            <person name="Jang M."/>
            <person name="Lee D.W."/>
            <person name="Lee S."/>
            <person name="Hwang I."/>
        </authorList>
    </citation>
    <scope>INTERACTION WITH EPSIN2</scope>
    <scope>SUBCELLULAR LOCATION</scope>
</reference>
<reference key="10">
    <citation type="journal article" date="2007" name="Proc. Natl. Acad. Sci. U.S.A.">
        <title>Divergent functions of VTI12 and VTI11 in trafficking to storage and lytic vacuoles in Arabidopsis.</title>
        <authorList>
            <person name="Sanmartin M."/>
            <person name="Ordonez A."/>
            <person name="Sohn E.J."/>
            <person name="Robert S."/>
            <person name="Sanchez-Serrano J.J."/>
            <person name="Surpin M.A."/>
            <person name="Raikhel N.V."/>
            <person name="Rojo E."/>
        </authorList>
    </citation>
    <scope>FUNCTION</scope>
    <scope>DISRUPTION PHENOTYPE</scope>
    <source>
        <strain>cv. Columbia</strain>
    </source>
</reference>
<reference key="11">
    <citation type="journal article" date="2010" name="Plant Cell">
        <title>Structural sterols are involved in both the initiation and tip growth of root hairs in Arabidopsis thaliana.</title>
        <authorList>
            <person name="Ovecka M."/>
            <person name="Berson T."/>
            <person name="Beck M."/>
            <person name="Derksen J."/>
            <person name="Samaj J."/>
            <person name="Baluska F."/>
            <person name="Lichtscheidl I.K."/>
        </authorList>
    </citation>
    <scope>SUBCELLULAR LOCATION</scope>
    <source>
        <strain>cv. Columbia</strain>
    </source>
</reference>
<reference key="12">
    <citation type="journal article" date="2012" name="Mol. Cell. Proteomics">
        <title>Comparative large-scale characterisation of plant vs. mammal proteins reveals similar and idiosyncratic N-alpha acetylation features.</title>
        <authorList>
            <person name="Bienvenut W.V."/>
            <person name="Sumpton D."/>
            <person name="Martinez A."/>
            <person name="Lilla S."/>
            <person name="Espagne C."/>
            <person name="Meinnel T."/>
            <person name="Giglione C."/>
        </authorList>
    </citation>
    <scope>ACETYLATION [LARGE SCALE ANALYSIS] AT SER-2</scope>
    <scope>CLEAVAGE OF INITIATOR METHIONINE [LARGE SCALE ANALYSIS]</scope>
    <scope>IDENTIFICATION BY MASS SPECTROMETRY [LARGE SCALE ANALYSIS]</scope>
</reference>
<reference key="13">
    <citation type="journal article" date="2013" name="BMC Biochem.">
        <title>Functional redundancy between trans-Golgi network SNARE family members in Arabidopsis thaliana.</title>
        <authorList>
            <person name="Kim S.-J."/>
            <person name="Bassham D.C."/>
        </authorList>
    </citation>
    <scope>FUNCTION</scope>
</reference>
<reference key="14">
    <citation type="journal article" date="2017" name="Plant Physiol.">
        <title>SCYL2 genes are involved in clathrin-mediated vesicle trafficking and essential for plant growth.</title>
        <authorList>
            <person name="Jung J.-Y."/>
            <person name="Lee D.W."/>
            <person name="Ryu S.B."/>
            <person name="Hwang I."/>
            <person name="Schachtman D.P."/>
        </authorList>
    </citation>
    <scope>INTERACTION WITH SCYL2B</scope>
    <source>
        <strain>cv. Columbia</strain>
    </source>
</reference>
<dbReference type="EMBL" id="AF114751">
    <property type="protein sequence ID" value="AAF24062.1"/>
    <property type="molecule type" value="mRNA"/>
</dbReference>
<dbReference type="EMBL" id="AC006535">
    <property type="protein sequence ID" value="AAF87026.1"/>
    <property type="molecule type" value="Genomic_DNA"/>
</dbReference>
<dbReference type="EMBL" id="CP002684">
    <property type="protein sequence ID" value="AEE30719.1"/>
    <property type="molecule type" value="Genomic_DNA"/>
</dbReference>
<dbReference type="RefSeq" id="NP_564255.1">
    <property type="nucleotide sequence ID" value="NM_102430.5"/>
</dbReference>
<dbReference type="SMR" id="Q9SEL5"/>
<dbReference type="BioGRID" id="24444">
    <property type="interactions" value="11"/>
</dbReference>
<dbReference type="FunCoup" id="Q9SEL5">
    <property type="interactions" value="3358"/>
</dbReference>
<dbReference type="IntAct" id="Q9SEL5">
    <property type="interactions" value="2"/>
</dbReference>
<dbReference type="STRING" id="3702.Q9SEL5"/>
<dbReference type="iPTMnet" id="Q9SEL5"/>
<dbReference type="PaxDb" id="3702-AT1G26670.1"/>
<dbReference type="ProteomicsDB" id="242672"/>
<dbReference type="EnsemblPlants" id="AT1G26670.1">
    <property type="protein sequence ID" value="AT1G26670.1"/>
    <property type="gene ID" value="AT1G26670"/>
</dbReference>
<dbReference type="GeneID" id="839208"/>
<dbReference type="Gramene" id="AT1G26670.1">
    <property type="protein sequence ID" value="AT1G26670.1"/>
    <property type="gene ID" value="AT1G26670"/>
</dbReference>
<dbReference type="KEGG" id="ath:AT1G26670"/>
<dbReference type="Araport" id="AT1G26670"/>
<dbReference type="TAIR" id="AT1G26670">
    <property type="gene designation" value="VTI1B"/>
</dbReference>
<dbReference type="eggNOG" id="KOG1666">
    <property type="taxonomic scope" value="Eukaryota"/>
</dbReference>
<dbReference type="HOGENOM" id="CLU_075474_3_0_1"/>
<dbReference type="InParanoid" id="Q9SEL5"/>
<dbReference type="OMA" id="YRRVMTN"/>
<dbReference type="OrthoDB" id="430637at2759"/>
<dbReference type="PhylomeDB" id="Q9SEL5"/>
<dbReference type="PRO" id="PR:Q9SEL5"/>
<dbReference type="Proteomes" id="UP000006548">
    <property type="component" value="Chromosome 1"/>
</dbReference>
<dbReference type="ExpressionAtlas" id="Q9SEL5">
    <property type="expression patterns" value="baseline and differential"/>
</dbReference>
<dbReference type="GO" id="GO:0005768">
    <property type="term" value="C:endosome"/>
    <property type="evidence" value="ECO:0007005"/>
    <property type="project" value="TAIR"/>
</dbReference>
<dbReference type="GO" id="GO:0005794">
    <property type="term" value="C:Golgi apparatus"/>
    <property type="evidence" value="ECO:0007005"/>
    <property type="project" value="TAIR"/>
</dbReference>
<dbReference type="GO" id="GO:0005770">
    <property type="term" value="C:late endosome"/>
    <property type="evidence" value="ECO:0000304"/>
    <property type="project" value="TAIR"/>
</dbReference>
<dbReference type="GO" id="GO:0005886">
    <property type="term" value="C:plasma membrane"/>
    <property type="evidence" value="ECO:0000314"/>
    <property type="project" value="TAIR"/>
</dbReference>
<dbReference type="GO" id="GO:0031201">
    <property type="term" value="C:SNARE complex"/>
    <property type="evidence" value="ECO:0000314"/>
    <property type="project" value="UniProtKB"/>
</dbReference>
<dbReference type="GO" id="GO:0005802">
    <property type="term" value="C:trans-Golgi network"/>
    <property type="evidence" value="ECO:0007005"/>
    <property type="project" value="TAIR"/>
</dbReference>
<dbReference type="GO" id="GO:0005484">
    <property type="term" value="F:SNAP receptor activity"/>
    <property type="evidence" value="ECO:0007669"/>
    <property type="project" value="InterPro"/>
</dbReference>
<dbReference type="GO" id="GO:0005483">
    <property type="term" value="F:soluble NSF attachment protein activity"/>
    <property type="evidence" value="ECO:0000304"/>
    <property type="project" value="TAIR"/>
</dbReference>
<dbReference type="GO" id="GO:0046907">
    <property type="term" value="P:intracellular transport"/>
    <property type="evidence" value="ECO:0000304"/>
    <property type="project" value="TAIR"/>
</dbReference>
<dbReference type="GO" id="GO:1990019">
    <property type="term" value="P:protein storage vacuole organization"/>
    <property type="evidence" value="ECO:0000314"/>
    <property type="project" value="UniProtKB"/>
</dbReference>
<dbReference type="GO" id="GO:0006623">
    <property type="term" value="P:protein targeting to vacuole"/>
    <property type="evidence" value="ECO:0000315"/>
    <property type="project" value="TAIR"/>
</dbReference>
<dbReference type="GO" id="GO:0006906">
    <property type="term" value="P:vesicle fusion"/>
    <property type="evidence" value="ECO:0000314"/>
    <property type="project" value="UniProtKB"/>
</dbReference>
<dbReference type="CDD" id="cd15862">
    <property type="entry name" value="SNARE_Vti1"/>
    <property type="match status" value="1"/>
</dbReference>
<dbReference type="FunFam" id="1.20.58.400:FF:000001">
    <property type="entry name" value="Vesicle transport through interaction with t-SNAREs homolog 1A"/>
    <property type="match status" value="1"/>
</dbReference>
<dbReference type="FunFam" id="1.20.5.110:FF:000002">
    <property type="entry name" value="Vesicle transport through interaction with t-SNAREsB"/>
    <property type="match status" value="1"/>
</dbReference>
<dbReference type="Gene3D" id="1.20.5.110">
    <property type="match status" value="1"/>
</dbReference>
<dbReference type="Gene3D" id="1.20.58.400">
    <property type="entry name" value="t-snare proteins"/>
    <property type="match status" value="1"/>
</dbReference>
<dbReference type="InterPro" id="IPR027027">
    <property type="entry name" value="GOSR2/Membrin/Bos1"/>
</dbReference>
<dbReference type="InterPro" id="IPR010989">
    <property type="entry name" value="SNARE"/>
</dbReference>
<dbReference type="InterPro" id="IPR038407">
    <property type="entry name" value="v-SNARE_N_sf"/>
</dbReference>
<dbReference type="InterPro" id="IPR007705">
    <property type="entry name" value="Vesicle_trsprt_v-SNARE_N"/>
</dbReference>
<dbReference type="PANTHER" id="PTHR21230:SF66">
    <property type="entry name" value="VESICLE TRANSPORT V-SNARE 12"/>
    <property type="match status" value="1"/>
</dbReference>
<dbReference type="PANTHER" id="PTHR21230">
    <property type="entry name" value="VESICLE TRANSPORT V-SNARE PROTEIN VTI1-RELATED"/>
    <property type="match status" value="1"/>
</dbReference>
<dbReference type="Pfam" id="PF05008">
    <property type="entry name" value="V-SNARE"/>
    <property type="match status" value="1"/>
</dbReference>
<dbReference type="Pfam" id="PF12352">
    <property type="entry name" value="V-SNARE_C"/>
    <property type="match status" value="1"/>
</dbReference>
<dbReference type="PIRSF" id="PIRSF028865">
    <property type="entry name" value="Membrin-2"/>
    <property type="match status" value="1"/>
</dbReference>
<dbReference type="SUPFAM" id="SSF58038">
    <property type="entry name" value="SNARE fusion complex"/>
    <property type="match status" value="1"/>
</dbReference>
<dbReference type="SUPFAM" id="SSF47661">
    <property type="entry name" value="t-snare proteins"/>
    <property type="match status" value="1"/>
</dbReference>
<feature type="initiator methionine" description="Removed" evidence="21">
    <location>
        <position position="1"/>
    </location>
</feature>
<feature type="chain" id="PRO_0000218234" description="Vesicle transport v-SNARE 12">
    <location>
        <begin position="2"/>
        <end position="222"/>
    </location>
</feature>
<feature type="topological domain" description="Cytoplasmic" evidence="2">
    <location>
        <begin position="2"/>
        <end position="199"/>
    </location>
</feature>
<feature type="transmembrane region" description="Helical; Anchor for type IV membrane protein" evidence="2">
    <location>
        <begin position="200"/>
        <end position="220"/>
    </location>
</feature>
<feature type="topological domain" description="Vesicular" evidence="2">
    <location>
        <begin position="221"/>
        <end position="222"/>
    </location>
</feature>
<feature type="coiled-coil region" evidence="2">
    <location>
        <begin position="68"/>
        <end position="95"/>
    </location>
</feature>
<feature type="modified residue" description="N-acetylserine" evidence="21">
    <location>
        <position position="2"/>
    </location>
</feature>
<feature type="mutagenesis site" description="In zip1; dominant suppressor of the zip1 mutation (plants lacking VTI11) by changing both the specificity of SNARE complex formation and its intracellular localization." evidence="6">
    <original>E</original>
    <variation>K</variation>
    <location>
        <position position="129"/>
    </location>
</feature>
<feature type="sequence conflict" description="In Ref. 1; AAF24062." evidence="18" ref="1">
    <original>E</original>
    <variation>Q</variation>
    <location>
        <position position="41"/>
    </location>
</feature>
<gene>
    <name evidence="15 17" type="primary">VTI12</name>
    <name evidence="13 14" type="synonym">VTI1B</name>
    <name evidence="16" type="synonym">ZIP1</name>
    <name evidence="19" type="ordered locus">At1g26670</name>
    <name evidence="20" type="ORF">T24P13.5</name>
</gene>
<sequence>MSDVFEGYERQYCELSTNLSRKCHSASVLSNGEEKKGKIAEIKSGIDEADVLIRKMDLEARSLQPSAKAVCLSKLREYKSDLNQLKKEFKRVSSADAKPSSREELMESGMADLHAVSADQRGRLAMSVERLDQSSDRIRESRRLMLETEEVGISIVQDLSQQRQTLLHAHNKLHGVDDAIDKSKKVLTAMSRRMTRNKWIITSVIVALVLAIILIISYKLSH</sequence>
<comment type="function">
    <text evidence="1 6 7 9 11">Together with either SYP41 or SYP61, required for membrane fusion; the fusion of phospholipid vesicles containing SYP41 or SYP61 and VTI12 is triggered by YKT61 and YKT62 (PubMed:15919093). Functions as a v-SNARE responsible for the docking or fusion of transport vesicles within the trans-Golgi network (TGN) and mediates liposome fusion (PubMed:15797025, PubMed:24021022). Necessary to deliver proteins to the protein storage vacuole (PSV) (PubMed:17360696). May be also involved in retrograde traffic to the cis-Golgi (By similarity).</text>
</comment>
<comment type="subunit">
    <text evidence="3 4 7 8 12">Forms SNARE complexes with the t-SNAREs SYP61 and either SYP41 or SYP42, and with a much lower affinity with SYP51 in the TGN (PubMed:11739776, PubMed:15919093). Also interacts with VPS45, a Sec1 protein, but not with SYP21 or SYP22 (PubMed:10888666). Binds to EPSIN2 (PubMed:17277094). Core constituent of the SNARE complex required for membrane fusion at the trans-Golgi network (PubMed:15919093). Interacts with SCYL2B (PubMed:28751315).</text>
</comment>
<comment type="subcellular location">
    <subcellularLocation>
        <location evidence="5 6 8">Golgi apparatus</location>
        <location evidence="5 6 8">trans-Golgi network membrane</location>
        <topology evidence="8">Single-pass type IV membrane protein</topology>
    </subcellularLocation>
    <subcellularLocation>
        <location evidence="6 8">Prevacuolar compartment membrane</location>
        <topology evidence="8">Single-pass type IV membrane protein</topology>
    </subcellularLocation>
    <subcellularLocation>
        <location evidence="5">Cell membrane</location>
        <topology evidence="2">Single-pass type IV membrane protein</topology>
    </subcellularLocation>
    <text evidence="10">Accumulates in structural sterols-containing apical and subapical compartments of developing root hairs tips.</text>
</comment>
<comment type="tissue specificity">
    <text evidence="5">Expressed in roots, stems, flowers and leaves.</text>
</comment>
<comment type="disruption phenotype">
    <text evidence="9">Altered transport of storage proteins to the protein storage vacuole (PSV).</text>
</comment>
<comment type="similarity">
    <text evidence="18">Belongs to the VTI1 family.</text>
</comment>
<accession>Q9SEL5</accession>
<accession>Q9LQY5</accession>
<proteinExistence type="evidence at protein level"/>